<organism evidence="7">
    <name type="scientific">Arabidopsis thaliana</name>
    <name type="common">Mouse-ear cress</name>
    <dbReference type="NCBI Taxonomy" id="3702"/>
    <lineage>
        <taxon>Eukaryota</taxon>
        <taxon>Viridiplantae</taxon>
        <taxon>Streptophyta</taxon>
        <taxon>Embryophyta</taxon>
        <taxon>Tracheophyta</taxon>
        <taxon>Spermatophyta</taxon>
        <taxon>Magnoliopsida</taxon>
        <taxon>eudicotyledons</taxon>
        <taxon>Gunneridae</taxon>
        <taxon>Pentapetalae</taxon>
        <taxon>rosids</taxon>
        <taxon>malvids</taxon>
        <taxon>Brassicales</taxon>
        <taxon>Brassicaceae</taxon>
        <taxon>Camelineae</taxon>
        <taxon>Arabidopsis</taxon>
    </lineage>
</organism>
<accession>Q8W4E6</accession>
<proteinExistence type="evidence at protein level"/>
<evidence type="ECO:0000255" key="1"/>
<evidence type="ECO:0000269" key="2">
    <source>
    </source>
</evidence>
<evidence type="ECO:0000269" key="3">
    <source>
    </source>
</evidence>
<evidence type="ECO:0000269" key="4">
    <source>
    </source>
</evidence>
<evidence type="ECO:0000303" key="5">
    <source>
    </source>
</evidence>
<evidence type="ECO:0000312" key="6">
    <source>
        <dbReference type="Araport" id="AT5G25265"/>
    </source>
</evidence>
<evidence type="ECO:0000312" key="7">
    <source>
        <dbReference type="EMBL" id="AAL32685.1"/>
    </source>
</evidence>
<protein>
    <recommendedName>
        <fullName evidence="5">Hydroxyproline O-arabinosyltransferase 1</fullName>
        <ecNumber evidence="2">2.4.2.58</ecNumber>
    </recommendedName>
</protein>
<feature type="chain" id="PRO_0000437954" description="Hydroxyproline O-arabinosyltransferase 1">
    <location>
        <begin position="1"/>
        <end position="366"/>
    </location>
</feature>
<feature type="transmembrane region" description="Helical; Signal-anchor" evidence="1">
    <location>
        <begin position="6"/>
        <end position="26"/>
    </location>
</feature>
<comment type="function">
    <text evidence="2 4">Glycosyltransferase involved in the O-arabinosylation of several proteins including extensins and small signaling peptides (PubMed:24036508, PubMed:26577059). Catalyzes the transfer of the initial L-arabinose to the hydroxyl group of Hyp residues (PubMed:24036508). Contributes redundantly with HPAT2 and HPAT3 to arabinosylation of EXT3 (PubMed:24036508).</text>
</comment>
<comment type="catalytic activity">
    <reaction evidence="2">
        <text>trans-4-hydroxy-L-prolyl-[protein] + UDP-beta-L-arabinofuranose = O-(beta-L-arabinofuranosyl)-trans-4-hydroxy-L-prolyl-[protein] + UDP + H(+)</text>
        <dbReference type="Rhea" id="RHEA:49472"/>
        <dbReference type="Rhea" id="RHEA-COMP:12408"/>
        <dbReference type="Rhea" id="RHEA-COMP:12409"/>
        <dbReference type="ChEBI" id="CHEBI:15378"/>
        <dbReference type="ChEBI" id="CHEBI:58223"/>
        <dbReference type="ChEBI" id="CHEBI:61463"/>
        <dbReference type="ChEBI" id="CHEBI:61965"/>
        <dbReference type="ChEBI" id="CHEBI:131610"/>
        <dbReference type="EC" id="2.4.2.58"/>
    </reaction>
</comment>
<comment type="subcellular location">
    <subcellularLocation>
        <location evidence="2">Golgi apparatus</location>
        <location evidence="2">cis-Golgi network membrane</location>
        <topology evidence="1">Single-pass type II membrane protein</topology>
    </subcellularLocation>
</comment>
<comment type="tissue specificity">
    <text evidence="2">Ubiquitous.</text>
</comment>
<comment type="disruption phenotype">
    <text evidence="2 3 4">No visible phenotype (PubMed:24036508). Short-root-hair phenotype (PubMed:25944827). Hpat1 hpat2 double mutants have longer hypocotyls, are early flowering and show early senescence in leaves associated with a decrease in chlorophyll content (PubMed:24036508). Hpat1 hpat3 double mutants have an impaired growth of pollen tubes, thereby causing a transmisson defect through the male gametophyte (PubMed:24036508). Hpat1 hpat2 hpat3 triple mutants fail to produce detectable levels of Hyp-arabinosides, have low fertility and shorter pollen tubes (PubMed:26577059).</text>
</comment>
<sequence>MGCGGTLFYPLLITLSVALITYNIIISANAPLKQGFPGRSSSSDISIDPVIELPRGGGSRNNDGKRIRLFHTAVTASDSVYNTWQCRVMYYWFKKIQASAGPGSEMGGFTRILHSGKPDQYMDEIPTFVAQPLPSGMDQGYVVLNRPWAFVQWLQQTDIKEDYILMSEPDHIIVKPIPNLAKDGLGAAFPFFYIEPKKYEKVLRKYYPEVRGPVTNIDPIGNSPVIVGKDALKKIAPTWMNVSLAMKKDPEADKAFGWVLEMYAYAVSSALHGVSNILHKDFMIQPPWDIEVGDKYIIHYTYGCDYDMKGKLTYGKIGEWRFDKRSYDSKPPPRNLTMPPPGVSQSVVTLVKMINEATANIPNWGS</sequence>
<keyword id="KW-0328">Glycosyltransferase</keyword>
<keyword id="KW-0333">Golgi apparatus</keyword>
<keyword id="KW-0472">Membrane</keyword>
<keyword id="KW-1185">Reference proteome</keyword>
<keyword id="KW-0735">Signal-anchor</keyword>
<keyword id="KW-0808">Transferase</keyword>
<keyword id="KW-0812">Transmembrane</keyword>
<keyword id="KW-1133">Transmembrane helix</keyword>
<name>HPAT1_ARATH</name>
<dbReference type="EC" id="2.4.2.58" evidence="2"/>
<dbReference type="EMBL" id="AC006259">
    <property type="status" value="NOT_ANNOTATED_CDS"/>
    <property type="molecule type" value="Genomic_DNA"/>
</dbReference>
<dbReference type="EMBL" id="CP002688">
    <property type="protein sequence ID" value="AED93419.1"/>
    <property type="molecule type" value="Genomic_DNA"/>
</dbReference>
<dbReference type="EMBL" id="AY062607">
    <property type="protein sequence ID" value="AAL32685.1"/>
    <property type="molecule type" value="mRNA"/>
</dbReference>
<dbReference type="EMBL" id="BT008447">
    <property type="protein sequence ID" value="AAP37806.1"/>
    <property type="molecule type" value="mRNA"/>
</dbReference>
<dbReference type="EMBL" id="AK230260">
    <property type="protein sequence ID" value="BAF02062.1"/>
    <property type="molecule type" value="mRNA"/>
</dbReference>
<dbReference type="RefSeq" id="NP_680219.1">
    <property type="nucleotide sequence ID" value="NM_147914.4"/>
</dbReference>
<dbReference type="FunCoup" id="Q8W4E6">
    <property type="interactions" value="764"/>
</dbReference>
<dbReference type="STRING" id="3702.Q8W4E6"/>
<dbReference type="SwissPalm" id="Q8W4E6"/>
<dbReference type="PaxDb" id="3702-AT5G25265.1"/>
<dbReference type="ProteomicsDB" id="232171"/>
<dbReference type="EnsemblPlants" id="AT5G25265.1">
    <property type="protein sequence ID" value="AT5G25265.1"/>
    <property type="gene ID" value="AT5G25265"/>
</dbReference>
<dbReference type="GeneID" id="832598"/>
<dbReference type="Gramene" id="AT5G25265.1">
    <property type="protein sequence ID" value="AT5G25265.1"/>
    <property type="gene ID" value="AT5G25265"/>
</dbReference>
<dbReference type="KEGG" id="ath:AT5G25265"/>
<dbReference type="Araport" id="AT5G25265"/>
<dbReference type="TAIR" id="AT5G25265">
    <property type="gene designation" value="HPAT1"/>
</dbReference>
<dbReference type="eggNOG" id="ENOG502QQNK">
    <property type="taxonomic scope" value="Eukaryota"/>
</dbReference>
<dbReference type="HOGENOM" id="CLU_065254_0_0_1"/>
<dbReference type="InParanoid" id="Q8W4E6"/>
<dbReference type="OMA" id="KFFPEHE"/>
<dbReference type="OrthoDB" id="10259977at2759"/>
<dbReference type="PhylomeDB" id="Q8W4E6"/>
<dbReference type="BioCyc" id="ARA:AT5G25265-MONOMER"/>
<dbReference type="BioCyc" id="MetaCyc:AT5G25265-MONOMER"/>
<dbReference type="CD-CODE" id="4299E36E">
    <property type="entry name" value="Nucleolus"/>
</dbReference>
<dbReference type="PRO" id="PR:Q8W4E6"/>
<dbReference type="Proteomes" id="UP000006548">
    <property type="component" value="Chromosome 5"/>
</dbReference>
<dbReference type="ExpressionAtlas" id="Q8W4E6">
    <property type="expression patterns" value="baseline and differential"/>
</dbReference>
<dbReference type="GO" id="GO:0005801">
    <property type="term" value="C:cis-Golgi network"/>
    <property type="evidence" value="ECO:0000314"/>
    <property type="project" value="TAIR"/>
</dbReference>
<dbReference type="GO" id="GO:0005768">
    <property type="term" value="C:endosome"/>
    <property type="evidence" value="ECO:0007005"/>
    <property type="project" value="TAIR"/>
</dbReference>
<dbReference type="GO" id="GO:0005794">
    <property type="term" value="C:Golgi apparatus"/>
    <property type="evidence" value="ECO:0007005"/>
    <property type="project" value="TAIR"/>
</dbReference>
<dbReference type="GO" id="GO:0005797">
    <property type="term" value="C:Golgi medial cisterna"/>
    <property type="evidence" value="ECO:0007005"/>
    <property type="project" value="TAIR"/>
</dbReference>
<dbReference type="GO" id="GO:0000325">
    <property type="term" value="C:plant-type vacuole"/>
    <property type="evidence" value="ECO:0007005"/>
    <property type="project" value="TAIR"/>
</dbReference>
<dbReference type="GO" id="GO:0005886">
    <property type="term" value="C:plasma membrane"/>
    <property type="evidence" value="ECO:0007005"/>
    <property type="project" value="TAIR"/>
</dbReference>
<dbReference type="GO" id="GO:0009536">
    <property type="term" value="C:plastid"/>
    <property type="evidence" value="ECO:0007005"/>
    <property type="project" value="TAIR"/>
</dbReference>
<dbReference type="GO" id="GO:0005802">
    <property type="term" value="C:trans-Golgi network"/>
    <property type="evidence" value="ECO:0007005"/>
    <property type="project" value="TAIR"/>
</dbReference>
<dbReference type="GO" id="GO:1990585">
    <property type="term" value="F:hydroxyproline O-arabinosyltransferase activity"/>
    <property type="evidence" value="ECO:0000314"/>
    <property type="project" value="TAIR"/>
</dbReference>
<dbReference type="InterPro" id="IPR056508">
    <property type="entry name" value="HPAT-like"/>
</dbReference>
<dbReference type="InterPro" id="IPR044845">
    <property type="entry name" value="HPAT/SRGT1-like"/>
</dbReference>
<dbReference type="PANTHER" id="PTHR31485:SF3">
    <property type="entry name" value="HYDROXYPROLINE O-ARABINOSYLTRANSFERASE 1"/>
    <property type="match status" value="1"/>
</dbReference>
<dbReference type="PANTHER" id="PTHR31485">
    <property type="entry name" value="PEPTIDYL SERINE ALPHA-GALACTOSYLTRANSFERASE"/>
    <property type="match status" value="1"/>
</dbReference>
<dbReference type="Pfam" id="PF23452">
    <property type="entry name" value="HPAT"/>
    <property type="match status" value="1"/>
</dbReference>
<gene>
    <name evidence="5" type="primary">HPAT1</name>
    <name evidence="6" type="ordered locus">At5g25265</name>
</gene>
<reference key="1">
    <citation type="journal article" date="2000" name="Nature">
        <title>Sequence and analysis of chromosome 5 of the plant Arabidopsis thaliana.</title>
        <authorList>
            <person name="Tabata S."/>
            <person name="Kaneko T."/>
            <person name="Nakamura Y."/>
            <person name="Kotani H."/>
            <person name="Kato T."/>
            <person name="Asamizu E."/>
            <person name="Miyajima N."/>
            <person name="Sasamoto S."/>
            <person name="Kimura T."/>
            <person name="Hosouchi T."/>
            <person name="Kawashima K."/>
            <person name="Kohara M."/>
            <person name="Matsumoto M."/>
            <person name="Matsuno A."/>
            <person name="Muraki A."/>
            <person name="Nakayama S."/>
            <person name="Nakazaki N."/>
            <person name="Naruo K."/>
            <person name="Okumura S."/>
            <person name="Shinpo S."/>
            <person name="Takeuchi C."/>
            <person name="Wada T."/>
            <person name="Watanabe A."/>
            <person name="Yamada M."/>
            <person name="Yasuda M."/>
            <person name="Sato S."/>
            <person name="de la Bastide M."/>
            <person name="Huang E."/>
            <person name="Spiegel L."/>
            <person name="Gnoj L."/>
            <person name="O'Shaughnessy A."/>
            <person name="Preston R."/>
            <person name="Habermann K."/>
            <person name="Murray J."/>
            <person name="Johnson D."/>
            <person name="Rohlfing T."/>
            <person name="Nelson J."/>
            <person name="Stoneking T."/>
            <person name="Pepin K."/>
            <person name="Spieth J."/>
            <person name="Sekhon M."/>
            <person name="Armstrong J."/>
            <person name="Becker M."/>
            <person name="Belter E."/>
            <person name="Cordum H."/>
            <person name="Cordes M."/>
            <person name="Courtney L."/>
            <person name="Courtney W."/>
            <person name="Dante M."/>
            <person name="Du H."/>
            <person name="Edwards J."/>
            <person name="Fryman J."/>
            <person name="Haakensen B."/>
            <person name="Lamar E."/>
            <person name="Latreille P."/>
            <person name="Leonard S."/>
            <person name="Meyer R."/>
            <person name="Mulvaney E."/>
            <person name="Ozersky P."/>
            <person name="Riley A."/>
            <person name="Strowmatt C."/>
            <person name="Wagner-McPherson C."/>
            <person name="Wollam A."/>
            <person name="Yoakum M."/>
            <person name="Bell M."/>
            <person name="Dedhia N."/>
            <person name="Parnell L."/>
            <person name="Shah R."/>
            <person name="Rodriguez M."/>
            <person name="Hoon See L."/>
            <person name="Vil D."/>
            <person name="Baker J."/>
            <person name="Kirchoff K."/>
            <person name="Toth K."/>
            <person name="King L."/>
            <person name="Bahret A."/>
            <person name="Miller B."/>
            <person name="Marra M.A."/>
            <person name="Martienssen R."/>
            <person name="McCombie W.R."/>
            <person name="Wilson R.K."/>
            <person name="Murphy G."/>
            <person name="Bancroft I."/>
            <person name="Volckaert G."/>
            <person name="Wambutt R."/>
            <person name="Duesterhoeft A."/>
            <person name="Stiekema W."/>
            <person name="Pohl T."/>
            <person name="Entian K.-D."/>
            <person name="Terryn N."/>
            <person name="Hartley N."/>
            <person name="Bent E."/>
            <person name="Johnson S."/>
            <person name="Langham S.-A."/>
            <person name="McCullagh B."/>
            <person name="Robben J."/>
            <person name="Grymonprez B."/>
            <person name="Zimmermann W."/>
            <person name="Ramsperger U."/>
            <person name="Wedler H."/>
            <person name="Balke K."/>
            <person name="Wedler E."/>
            <person name="Peters S."/>
            <person name="van Staveren M."/>
            <person name="Dirkse W."/>
            <person name="Mooijman P."/>
            <person name="Klein Lankhorst R."/>
            <person name="Weitzenegger T."/>
            <person name="Bothe G."/>
            <person name="Rose M."/>
            <person name="Hauf J."/>
            <person name="Berneiser S."/>
            <person name="Hempel S."/>
            <person name="Feldpausch M."/>
            <person name="Lamberth S."/>
            <person name="Villarroel R."/>
            <person name="Gielen J."/>
            <person name="Ardiles W."/>
            <person name="Bents O."/>
            <person name="Lemcke K."/>
            <person name="Kolesov G."/>
            <person name="Mayer K.F.X."/>
            <person name="Rudd S."/>
            <person name="Schoof H."/>
            <person name="Schueller C."/>
            <person name="Zaccaria P."/>
            <person name="Mewes H.-W."/>
            <person name="Bevan M."/>
            <person name="Fransz P.F."/>
        </authorList>
    </citation>
    <scope>NUCLEOTIDE SEQUENCE [LARGE SCALE GENOMIC DNA]</scope>
    <source>
        <strain>cv. Columbia</strain>
    </source>
</reference>
<reference key="2">
    <citation type="journal article" date="2017" name="Plant J.">
        <title>Araport11: a complete reannotation of the Arabidopsis thaliana reference genome.</title>
        <authorList>
            <person name="Cheng C.Y."/>
            <person name="Krishnakumar V."/>
            <person name="Chan A.P."/>
            <person name="Thibaud-Nissen F."/>
            <person name="Schobel S."/>
            <person name="Town C.D."/>
        </authorList>
    </citation>
    <scope>GENOME REANNOTATION</scope>
    <source>
        <strain>cv. Columbia</strain>
    </source>
</reference>
<reference key="3">
    <citation type="journal article" date="2003" name="Science">
        <title>Empirical analysis of transcriptional activity in the Arabidopsis genome.</title>
        <authorList>
            <person name="Yamada K."/>
            <person name="Lim J."/>
            <person name="Dale J.M."/>
            <person name="Chen H."/>
            <person name="Shinn P."/>
            <person name="Palm C.J."/>
            <person name="Southwick A.M."/>
            <person name="Wu H.C."/>
            <person name="Kim C.J."/>
            <person name="Nguyen M."/>
            <person name="Pham P.K."/>
            <person name="Cheuk R.F."/>
            <person name="Karlin-Newmann G."/>
            <person name="Liu S.X."/>
            <person name="Lam B."/>
            <person name="Sakano H."/>
            <person name="Wu T."/>
            <person name="Yu G."/>
            <person name="Miranda M."/>
            <person name="Quach H.L."/>
            <person name="Tripp M."/>
            <person name="Chang C.H."/>
            <person name="Lee J.M."/>
            <person name="Toriumi M.J."/>
            <person name="Chan M.M."/>
            <person name="Tang C.C."/>
            <person name="Onodera C.S."/>
            <person name="Deng J.M."/>
            <person name="Akiyama K."/>
            <person name="Ansari Y."/>
            <person name="Arakawa T."/>
            <person name="Banh J."/>
            <person name="Banno F."/>
            <person name="Bowser L."/>
            <person name="Brooks S.Y."/>
            <person name="Carninci P."/>
            <person name="Chao Q."/>
            <person name="Choy N."/>
            <person name="Enju A."/>
            <person name="Goldsmith A.D."/>
            <person name="Gurjal M."/>
            <person name="Hansen N.F."/>
            <person name="Hayashizaki Y."/>
            <person name="Johnson-Hopson C."/>
            <person name="Hsuan V.W."/>
            <person name="Iida K."/>
            <person name="Karnes M."/>
            <person name="Khan S."/>
            <person name="Koesema E."/>
            <person name="Ishida J."/>
            <person name="Jiang P.X."/>
            <person name="Jones T."/>
            <person name="Kawai J."/>
            <person name="Kamiya A."/>
            <person name="Meyers C."/>
            <person name="Nakajima M."/>
            <person name="Narusaka M."/>
            <person name="Seki M."/>
            <person name="Sakurai T."/>
            <person name="Satou M."/>
            <person name="Tamse R."/>
            <person name="Vaysberg M."/>
            <person name="Wallender E.K."/>
            <person name="Wong C."/>
            <person name="Yamamura Y."/>
            <person name="Yuan S."/>
            <person name="Shinozaki K."/>
            <person name="Davis R.W."/>
            <person name="Theologis A."/>
            <person name="Ecker J.R."/>
        </authorList>
    </citation>
    <scope>NUCLEOTIDE SEQUENCE [LARGE SCALE MRNA]</scope>
    <source>
        <strain>cv. Columbia</strain>
    </source>
</reference>
<reference key="4">
    <citation type="submission" date="2006-07" db="EMBL/GenBank/DDBJ databases">
        <title>Large-scale analysis of RIKEN Arabidopsis full-length (RAFL) cDNAs.</title>
        <authorList>
            <person name="Totoki Y."/>
            <person name="Seki M."/>
            <person name="Ishida J."/>
            <person name="Nakajima M."/>
            <person name="Enju A."/>
            <person name="Kamiya A."/>
            <person name="Narusaka M."/>
            <person name="Shin-i T."/>
            <person name="Nakagawa M."/>
            <person name="Sakamoto N."/>
            <person name="Oishi K."/>
            <person name="Kohara Y."/>
            <person name="Kobayashi M."/>
            <person name="Toyoda A."/>
            <person name="Sakaki Y."/>
            <person name="Sakurai T."/>
            <person name="Iida K."/>
            <person name="Akiyama K."/>
            <person name="Satou M."/>
            <person name="Toyoda T."/>
            <person name="Konagaya A."/>
            <person name="Carninci P."/>
            <person name="Kawai J."/>
            <person name="Hayashizaki Y."/>
            <person name="Shinozaki K."/>
        </authorList>
    </citation>
    <scope>NUCLEOTIDE SEQUENCE [LARGE SCALE MRNA]</scope>
    <source>
        <strain>cv. Columbia</strain>
    </source>
</reference>
<reference key="5">
    <citation type="journal article" date="2013" name="Nat. Chem. Biol.">
        <title>Identification of three hydroxyproline O-arabinosyltransferases in Arabidopsis thaliana.</title>
        <authorList>
            <person name="Ogawa-Ohnishi M."/>
            <person name="Matsushita W."/>
            <person name="Matsubayashi Y."/>
        </authorList>
    </citation>
    <scope>FUNCTION</scope>
    <scope>CATALYTIC ACTIVITY</scope>
    <scope>TISSUE SPECIFICITY</scope>
    <scope>SUBCELLULAR LOCATION</scope>
    <scope>DISRUPTION PHENOTYPE</scope>
</reference>
<reference key="6">
    <citation type="journal article" date="2015" name="Plant Physiol.">
        <title>Low sugar is not always good: impact of specific o-glycan defects on tip growth in Arabidopsis.</title>
        <authorList>
            <person name="Velasquez S.M."/>
            <person name="Marzol E."/>
            <person name="Borassi C."/>
            <person name="Pol-Fachin L."/>
            <person name="Ricardi M.M."/>
            <person name="Mangano S."/>
            <person name="Juarez S.P."/>
            <person name="Salter J.D."/>
            <person name="Dorosz J.G."/>
            <person name="Marcus S.E."/>
            <person name="Knox J.P."/>
            <person name="Dinneny J.R."/>
            <person name="Iusem N.D."/>
            <person name="Verli H."/>
            <person name="Estevez J.M."/>
        </authorList>
    </citation>
    <scope>DISRUPTION PHENOTYPE</scope>
</reference>
<reference key="7">
    <citation type="journal article" date="2016" name="Plant J.">
        <title>Hydroxyproline O-arabinosyltransferase mutants oppositely alter tip growth in Arabidopsis thaliana and Physcomitrella patens.</title>
        <authorList>
            <person name="MacAlister C.A."/>
            <person name="Ortiz-Ramirez C."/>
            <person name="Becker J.D."/>
            <person name="Feijo J.A."/>
            <person name="Lippman Z.B."/>
        </authorList>
    </citation>
    <scope>FUNCTION</scope>
    <scope>DISRUPTION PHENOTYPE</scope>
</reference>